<reference key="1">
    <citation type="submission" date="2003-10" db="EMBL/GenBank/DDBJ databases">
        <title>The complete genome sequence of the alkaliphilic Bacillus clausii KSM-K16.</title>
        <authorList>
            <person name="Takaki Y."/>
            <person name="Kageyama Y."/>
            <person name="Shimamura S."/>
            <person name="Suzuki H."/>
            <person name="Nishi S."/>
            <person name="Hatada Y."/>
            <person name="Kawai S."/>
            <person name="Ito S."/>
            <person name="Horikoshi K."/>
        </authorList>
    </citation>
    <scope>NUCLEOTIDE SEQUENCE [LARGE SCALE GENOMIC DNA]</scope>
    <source>
        <strain>KSM-K16</strain>
    </source>
</reference>
<keyword id="KW-0963">Cytoplasm</keyword>
<keyword id="KW-0342">GTP-binding</keyword>
<keyword id="KW-0396">Initiation factor</keyword>
<keyword id="KW-0547">Nucleotide-binding</keyword>
<keyword id="KW-0648">Protein biosynthesis</keyword>
<keyword id="KW-1185">Reference proteome</keyword>
<gene>
    <name evidence="2" type="primary">infB</name>
    <name type="ordered locus">ABC2228</name>
</gene>
<organism>
    <name type="scientific">Shouchella clausii (strain KSM-K16)</name>
    <name type="common">Alkalihalobacillus clausii</name>
    <dbReference type="NCBI Taxonomy" id="66692"/>
    <lineage>
        <taxon>Bacteria</taxon>
        <taxon>Bacillati</taxon>
        <taxon>Bacillota</taxon>
        <taxon>Bacilli</taxon>
        <taxon>Bacillales</taxon>
        <taxon>Bacillaceae</taxon>
        <taxon>Shouchella</taxon>
    </lineage>
</organism>
<proteinExistence type="inferred from homology"/>
<name>IF2_SHOC1</name>
<protein>
    <recommendedName>
        <fullName evidence="2">Translation initiation factor IF-2</fullName>
    </recommendedName>
</protein>
<dbReference type="EMBL" id="AP006627">
    <property type="protein sequence ID" value="BAD64763.1"/>
    <property type="molecule type" value="Genomic_DNA"/>
</dbReference>
<dbReference type="RefSeq" id="WP_011247071.1">
    <property type="nucleotide sequence ID" value="NC_006582.1"/>
</dbReference>
<dbReference type="SMR" id="Q5WFU2"/>
<dbReference type="STRING" id="66692.ABC2228"/>
<dbReference type="KEGG" id="bcl:ABC2228"/>
<dbReference type="eggNOG" id="COG0532">
    <property type="taxonomic scope" value="Bacteria"/>
</dbReference>
<dbReference type="HOGENOM" id="CLU_006301_5_1_9"/>
<dbReference type="OrthoDB" id="9811804at2"/>
<dbReference type="Proteomes" id="UP000001168">
    <property type="component" value="Chromosome"/>
</dbReference>
<dbReference type="GO" id="GO:0005829">
    <property type="term" value="C:cytosol"/>
    <property type="evidence" value="ECO:0007669"/>
    <property type="project" value="TreeGrafter"/>
</dbReference>
<dbReference type="GO" id="GO:0005525">
    <property type="term" value="F:GTP binding"/>
    <property type="evidence" value="ECO:0007669"/>
    <property type="project" value="UniProtKB-KW"/>
</dbReference>
<dbReference type="GO" id="GO:0003924">
    <property type="term" value="F:GTPase activity"/>
    <property type="evidence" value="ECO:0007669"/>
    <property type="project" value="UniProtKB-UniRule"/>
</dbReference>
<dbReference type="GO" id="GO:0003743">
    <property type="term" value="F:translation initiation factor activity"/>
    <property type="evidence" value="ECO:0007669"/>
    <property type="project" value="UniProtKB-UniRule"/>
</dbReference>
<dbReference type="CDD" id="cd01887">
    <property type="entry name" value="IF2_eIF5B"/>
    <property type="match status" value="1"/>
</dbReference>
<dbReference type="CDD" id="cd03702">
    <property type="entry name" value="IF2_mtIF2_II"/>
    <property type="match status" value="1"/>
</dbReference>
<dbReference type="CDD" id="cd03692">
    <property type="entry name" value="mtIF2_IVc"/>
    <property type="match status" value="1"/>
</dbReference>
<dbReference type="FunFam" id="2.40.30.10:FF:000007">
    <property type="entry name" value="Translation initiation factor IF-2"/>
    <property type="match status" value="1"/>
</dbReference>
<dbReference type="FunFam" id="2.40.30.10:FF:000008">
    <property type="entry name" value="Translation initiation factor IF-2"/>
    <property type="match status" value="1"/>
</dbReference>
<dbReference type="FunFam" id="3.40.50.10050:FF:000001">
    <property type="entry name" value="Translation initiation factor IF-2"/>
    <property type="match status" value="1"/>
</dbReference>
<dbReference type="FunFam" id="3.40.50.300:FF:000019">
    <property type="entry name" value="Translation initiation factor IF-2"/>
    <property type="match status" value="1"/>
</dbReference>
<dbReference type="Gene3D" id="1.10.10.2480">
    <property type="match status" value="1"/>
</dbReference>
<dbReference type="Gene3D" id="3.40.50.300">
    <property type="entry name" value="P-loop containing nucleotide triphosphate hydrolases"/>
    <property type="match status" value="1"/>
</dbReference>
<dbReference type="Gene3D" id="2.40.30.10">
    <property type="entry name" value="Translation factors"/>
    <property type="match status" value="2"/>
</dbReference>
<dbReference type="Gene3D" id="3.40.50.10050">
    <property type="entry name" value="Translation initiation factor IF- 2, domain 3"/>
    <property type="match status" value="1"/>
</dbReference>
<dbReference type="HAMAP" id="MF_00100_B">
    <property type="entry name" value="IF_2_B"/>
    <property type="match status" value="1"/>
</dbReference>
<dbReference type="InterPro" id="IPR053905">
    <property type="entry name" value="EF-G-like_DII"/>
</dbReference>
<dbReference type="InterPro" id="IPR044145">
    <property type="entry name" value="IF2_II"/>
</dbReference>
<dbReference type="InterPro" id="IPR006847">
    <property type="entry name" value="IF2_N"/>
</dbReference>
<dbReference type="InterPro" id="IPR027417">
    <property type="entry name" value="P-loop_NTPase"/>
</dbReference>
<dbReference type="InterPro" id="IPR005225">
    <property type="entry name" value="Small_GTP-bd"/>
</dbReference>
<dbReference type="InterPro" id="IPR000795">
    <property type="entry name" value="T_Tr_GTP-bd_dom"/>
</dbReference>
<dbReference type="InterPro" id="IPR000178">
    <property type="entry name" value="TF_IF2_bacterial-like"/>
</dbReference>
<dbReference type="InterPro" id="IPR015760">
    <property type="entry name" value="TIF_IF2"/>
</dbReference>
<dbReference type="InterPro" id="IPR023115">
    <property type="entry name" value="TIF_IF2_dom3"/>
</dbReference>
<dbReference type="InterPro" id="IPR036925">
    <property type="entry name" value="TIF_IF2_dom3_sf"/>
</dbReference>
<dbReference type="InterPro" id="IPR009000">
    <property type="entry name" value="Transl_B-barrel_sf"/>
</dbReference>
<dbReference type="NCBIfam" id="TIGR00487">
    <property type="entry name" value="IF-2"/>
    <property type="match status" value="1"/>
</dbReference>
<dbReference type="NCBIfam" id="TIGR00231">
    <property type="entry name" value="small_GTP"/>
    <property type="match status" value="1"/>
</dbReference>
<dbReference type="PANTHER" id="PTHR43381:SF5">
    <property type="entry name" value="TR-TYPE G DOMAIN-CONTAINING PROTEIN"/>
    <property type="match status" value="1"/>
</dbReference>
<dbReference type="PANTHER" id="PTHR43381">
    <property type="entry name" value="TRANSLATION INITIATION FACTOR IF-2-RELATED"/>
    <property type="match status" value="1"/>
</dbReference>
<dbReference type="Pfam" id="PF22042">
    <property type="entry name" value="EF-G_D2"/>
    <property type="match status" value="1"/>
</dbReference>
<dbReference type="Pfam" id="PF00009">
    <property type="entry name" value="GTP_EFTU"/>
    <property type="match status" value="1"/>
</dbReference>
<dbReference type="Pfam" id="PF11987">
    <property type="entry name" value="IF-2"/>
    <property type="match status" value="1"/>
</dbReference>
<dbReference type="Pfam" id="PF04760">
    <property type="entry name" value="IF2_N"/>
    <property type="match status" value="2"/>
</dbReference>
<dbReference type="SUPFAM" id="SSF52156">
    <property type="entry name" value="Initiation factor IF2/eIF5b, domain 3"/>
    <property type="match status" value="1"/>
</dbReference>
<dbReference type="SUPFAM" id="SSF52540">
    <property type="entry name" value="P-loop containing nucleoside triphosphate hydrolases"/>
    <property type="match status" value="1"/>
</dbReference>
<dbReference type="SUPFAM" id="SSF50447">
    <property type="entry name" value="Translation proteins"/>
    <property type="match status" value="2"/>
</dbReference>
<dbReference type="PROSITE" id="PS51722">
    <property type="entry name" value="G_TR_2"/>
    <property type="match status" value="1"/>
</dbReference>
<dbReference type="PROSITE" id="PS01176">
    <property type="entry name" value="IF2"/>
    <property type="match status" value="1"/>
</dbReference>
<evidence type="ECO:0000250" key="1"/>
<evidence type="ECO:0000255" key="2">
    <source>
        <dbReference type="HAMAP-Rule" id="MF_00100"/>
    </source>
</evidence>
<evidence type="ECO:0000256" key="3">
    <source>
        <dbReference type="SAM" id="MobiDB-lite"/>
    </source>
</evidence>
<feature type="chain" id="PRO_0000228165" description="Translation initiation factor IF-2">
    <location>
        <begin position="1"/>
        <end position="761"/>
    </location>
</feature>
<feature type="domain" description="tr-type G">
    <location>
        <begin position="262"/>
        <end position="435"/>
    </location>
</feature>
<feature type="region of interest" description="Disordered" evidence="3">
    <location>
        <begin position="39"/>
        <end position="179"/>
    </location>
</feature>
<feature type="region of interest" description="G1" evidence="1">
    <location>
        <begin position="271"/>
        <end position="278"/>
    </location>
</feature>
<feature type="region of interest" description="G2" evidence="1">
    <location>
        <begin position="296"/>
        <end position="300"/>
    </location>
</feature>
<feature type="region of interest" description="G3" evidence="1">
    <location>
        <begin position="317"/>
        <end position="320"/>
    </location>
</feature>
<feature type="region of interest" description="G4" evidence="1">
    <location>
        <begin position="371"/>
        <end position="374"/>
    </location>
</feature>
<feature type="region of interest" description="G5" evidence="1">
    <location>
        <begin position="407"/>
        <end position="409"/>
    </location>
</feature>
<feature type="compositionally biased region" description="Low complexity" evidence="3">
    <location>
        <begin position="45"/>
        <end position="105"/>
    </location>
</feature>
<feature type="compositionally biased region" description="Polar residues" evidence="3">
    <location>
        <begin position="106"/>
        <end position="120"/>
    </location>
</feature>
<feature type="compositionally biased region" description="Low complexity" evidence="3">
    <location>
        <begin position="142"/>
        <end position="154"/>
    </location>
</feature>
<feature type="compositionally biased region" description="Basic residues" evidence="3">
    <location>
        <begin position="155"/>
        <end position="168"/>
    </location>
</feature>
<feature type="binding site" evidence="2">
    <location>
        <begin position="271"/>
        <end position="278"/>
    </location>
    <ligand>
        <name>GTP</name>
        <dbReference type="ChEBI" id="CHEBI:37565"/>
    </ligand>
</feature>
<feature type="binding site" evidence="2">
    <location>
        <begin position="317"/>
        <end position="321"/>
    </location>
    <ligand>
        <name>GTP</name>
        <dbReference type="ChEBI" id="CHEBI:37565"/>
    </ligand>
</feature>
<feature type="binding site" evidence="2">
    <location>
        <begin position="371"/>
        <end position="374"/>
    </location>
    <ligand>
        <name>GTP</name>
        <dbReference type="ChEBI" id="CHEBI:37565"/>
    </ligand>
</feature>
<comment type="function">
    <text evidence="2">One of the essential components for the initiation of protein synthesis. Protects formylmethionyl-tRNA from spontaneous hydrolysis and promotes its binding to the 30S ribosomal subunits. Also involved in the hydrolysis of GTP during the formation of the 70S ribosomal complex.</text>
</comment>
<comment type="subcellular location">
    <subcellularLocation>
        <location evidence="2">Cytoplasm</location>
    </subcellularLocation>
</comment>
<comment type="similarity">
    <text evidence="2">Belongs to the TRAFAC class translation factor GTPase superfamily. Classic translation factor GTPase family. IF-2 subfamily.</text>
</comment>
<sequence length="761" mass="82736">MSKVRIYEYAKANNVQSKQLIESLKSMGVEVSNHMSAIDEETLNKAKQAGKPAAAKGQGSTSNQKQNSQNQRSNQGQKQRPQNNQQNQGQKQRPQNNQQSQSQGQTKRPSQASNNQSGAAKSQAGKPNQNRGGNRPGGQGRPGSNNRRPGNNQNRRNHGNRGGKRRPQSKVNHQQMPLPEKITISGSHTVSELAAKLHREASELIKKLIGLGVMATINQELDKDTIELLAADYGVEVEEEVIVDELDIELYDREDKEEELKERPPVVTIMGHVDHGKTTLLDSIRNTKVTAGEAGGITQHIGAYQIEHSGKKITFLDTPGHAAFTTMRARGAQVTDITILVVAADDGVMPQTKEAISHAKAAEVPIIVAVNKIDKETASPDRVMQELTEFELVPEAWGGDTIFVNVSALTGEGIDELIEMILLVAEVEEFKANPDKLATGTVVEAQLDKGRGPVATLLVQSGTLNVGDAVVVGSTFGRVRALVNDVGRRVKTAGPSAPVEITGLNEVPQAGDRFQAFEDEKKARQLGEGLMARYREQNLTASSKVSLDDLFNQIQQGDVKDINVIIKADVQGSVEAMKGSLEKIDVAGVKVNIIHTGAGAITESDIILASASNAIVIGFNVRPDVNAKRVAEAENVDIRLHRVIYNAIDEIEQAMKGALDPEFEEKVIGQVEVRTTFKVSKVGTIAGSYVTEGKITRNSSVRLIRDGIVIYEGELNALKRYKDDAKEVQAGYECGITLDKFNDIKEGDMIEAYVMEEVKRA</sequence>
<accession>Q5WFU2</accession>